<accession>A3M2K0</accession>
<name>RSMJ_ACIBT</name>
<sequence length="279" mass="31978">MEKNCGSGQSKLKALRMHIYFEVDFQEQAQHYQAVLYSRGVTVDLQPIEKLNARFLRLNPDLALCVDENGLWLSANGMKMQPDWKAEIPRLKRATLKSEMIARACQLGEKPVLVDATAGLGHDSLLMAYLGAQIQLVERHPILFTLLEDSKAQAQHDPFLSQFMDRIQLIFADSASYLQQLDQEEKTVDVVYLDPMFPQRDQNQQAIKKQAQVKKQMQLLHLLLPEDGEMDLGDHLLELAKKVAKRVIVKRPRHAIFLANQEPAHQWQGDACRFDAYFQ</sequence>
<comment type="function">
    <text evidence="1">Specifically methylates the guanosine in position 1516 of 16S rRNA.</text>
</comment>
<comment type="catalytic activity">
    <reaction evidence="1">
        <text>guanosine(1516) in 16S rRNA + S-adenosyl-L-methionine = N(2)-methylguanosine(1516) in 16S rRNA + S-adenosyl-L-homocysteine + H(+)</text>
        <dbReference type="Rhea" id="RHEA:43220"/>
        <dbReference type="Rhea" id="RHEA-COMP:10412"/>
        <dbReference type="Rhea" id="RHEA-COMP:10413"/>
        <dbReference type="ChEBI" id="CHEBI:15378"/>
        <dbReference type="ChEBI" id="CHEBI:57856"/>
        <dbReference type="ChEBI" id="CHEBI:59789"/>
        <dbReference type="ChEBI" id="CHEBI:74269"/>
        <dbReference type="ChEBI" id="CHEBI:74481"/>
        <dbReference type="EC" id="2.1.1.242"/>
    </reaction>
</comment>
<comment type="subcellular location">
    <subcellularLocation>
        <location evidence="1">Cytoplasm</location>
    </subcellularLocation>
</comment>
<comment type="similarity">
    <text evidence="1">Belongs to the methyltransferase superfamily. RsmJ family.</text>
</comment>
<comment type="sequence caution" evidence="2">
    <conflict type="erroneous initiation">
        <sequence resource="EMBL-CDS" id="ABO11144"/>
    </conflict>
    <text>Truncated N-terminus.</text>
</comment>
<protein>
    <recommendedName>
        <fullName evidence="1">Ribosomal RNA small subunit methyltransferase J</fullName>
        <ecNumber evidence="1">2.1.1.242</ecNumber>
    </recommendedName>
    <alternativeName>
        <fullName evidence="1">16S rRNA m2G1516 methyltransferase</fullName>
    </alternativeName>
    <alternativeName>
        <fullName evidence="1">rRNA (guanine-N(2)-)-methyltransferase</fullName>
    </alternativeName>
</protein>
<reference key="1">
    <citation type="journal article" date="2007" name="Genes Dev.">
        <title>New insights into Acinetobacter baumannii pathogenesis revealed by high-density pyrosequencing and transposon mutagenesis.</title>
        <authorList>
            <person name="Smith M.G."/>
            <person name="Gianoulis T.A."/>
            <person name="Pukatzki S."/>
            <person name="Mekalanos J.J."/>
            <person name="Ornston L.N."/>
            <person name="Gerstein M."/>
            <person name="Snyder M."/>
        </authorList>
    </citation>
    <scope>NUCLEOTIDE SEQUENCE [LARGE SCALE GENOMIC DNA]</scope>
    <source>
        <strain>ATCC 17978 / DSM 105126 / CIP 53.77 / LMG 1025 / NCDC KC755 / 5377</strain>
    </source>
</reference>
<organism>
    <name type="scientific">Acinetobacter baumannii (strain ATCC 17978 / DSM 105126 / CIP 53.77 / LMG 1025 / NCDC KC755 / 5377)</name>
    <dbReference type="NCBI Taxonomy" id="400667"/>
    <lineage>
        <taxon>Bacteria</taxon>
        <taxon>Pseudomonadati</taxon>
        <taxon>Pseudomonadota</taxon>
        <taxon>Gammaproteobacteria</taxon>
        <taxon>Moraxellales</taxon>
        <taxon>Moraxellaceae</taxon>
        <taxon>Acinetobacter</taxon>
        <taxon>Acinetobacter calcoaceticus/baumannii complex</taxon>
    </lineage>
</organism>
<proteinExistence type="inferred from homology"/>
<keyword id="KW-0963">Cytoplasm</keyword>
<keyword id="KW-0489">Methyltransferase</keyword>
<keyword id="KW-0698">rRNA processing</keyword>
<keyword id="KW-0949">S-adenosyl-L-methionine</keyword>
<keyword id="KW-0808">Transferase</keyword>
<feature type="chain" id="PRO_0000296963" description="Ribosomal RNA small subunit methyltransferase J">
    <location>
        <begin position="1"/>
        <end position="279"/>
    </location>
</feature>
<feature type="binding site" evidence="1">
    <location>
        <begin position="138"/>
        <end position="139"/>
    </location>
    <ligand>
        <name>S-adenosyl-L-methionine</name>
        <dbReference type="ChEBI" id="CHEBI:59789"/>
    </ligand>
</feature>
<feature type="binding site" evidence="1">
    <location>
        <position position="194"/>
    </location>
    <ligand>
        <name>S-adenosyl-L-methionine</name>
        <dbReference type="ChEBI" id="CHEBI:59789"/>
    </ligand>
</feature>
<evidence type="ECO:0000255" key="1">
    <source>
        <dbReference type="HAMAP-Rule" id="MF_01523"/>
    </source>
</evidence>
<evidence type="ECO:0000305" key="2"/>
<dbReference type="EC" id="2.1.1.242" evidence="1"/>
<dbReference type="EMBL" id="CP000521">
    <property type="protein sequence ID" value="ABO11144.2"/>
    <property type="status" value="ALT_INIT"/>
    <property type="molecule type" value="Genomic_DNA"/>
</dbReference>
<dbReference type="RefSeq" id="WP_000548450.1">
    <property type="nucleotide sequence ID" value="NZ_CP053098.1"/>
</dbReference>
<dbReference type="SMR" id="A3M2K0"/>
<dbReference type="KEGG" id="acb:A1S_0700"/>
<dbReference type="HOGENOM" id="CLU_076324_1_0_6"/>
<dbReference type="GO" id="GO:0005737">
    <property type="term" value="C:cytoplasm"/>
    <property type="evidence" value="ECO:0007669"/>
    <property type="project" value="UniProtKB-SubCell"/>
</dbReference>
<dbReference type="GO" id="GO:0008990">
    <property type="term" value="F:rRNA (guanine-N2-)-methyltransferase activity"/>
    <property type="evidence" value="ECO:0007669"/>
    <property type="project" value="UniProtKB-UniRule"/>
</dbReference>
<dbReference type="CDD" id="cd02440">
    <property type="entry name" value="AdoMet_MTases"/>
    <property type="match status" value="1"/>
</dbReference>
<dbReference type="Gene3D" id="3.40.50.150">
    <property type="entry name" value="Vaccinia Virus protein VP39"/>
    <property type="match status" value="1"/>
</dbReference>
<dbReference type="HAMAP" id="MF_01523">
    <property type="entry name" value="16SrRNA_methyltr_J"/>
    <property type="match status" value="1"/>
</dbReference>
<dbReference type="InterPro" id="IPR007536">
    <property type="entry name" value="16SrRNA_methylTrfase_J"/>
</dbReference>
<dbReference type="InterPro" id="IPR029063">
    <property type="entry name" value="SAM-dependent_MTases_sf"/>
</dbReference>
<dbReference type="PANTHER" id="PTHR36112">
    <property type="entry name" value="RIBOSOMAL RNA SMALL SUBUNIT METHYLTRANSFERASE J"/>
    <property type="match status" value="1"/>
</dbReference>
<dbReference type="PANTHER" id="PTHR36112:SF1">
    <property type="entry name" value="RIBOSOMAL RNA SMALL SUBUNIT METHYLTRANSFERASE J"/>
    <property type="match status" value="1"/>
</dbReference>
<dbReference type="Pfam" id="PF04445">
    <property type="entry name" value="SAM_MT"/>
    <property type="match status" value="1"/>
</dbReference>
<dbReference type="SUPFAM" id="SSF53335">
    <property type="entry name" value="S-adenosyl-L-methionine-dependent methyltransferases"/>
    <property type="match status" value="1"/>
</dbReference>
<gene>
    <name evidence="1" type="primary">rsmJ</name>
    <name type="ordered locus">A1S_0700</name>
</gene>